<evidence type="ECO:0000255" key="1">
    <source>
        <dbReference type="HAMAP-Rule" id="MF_00551"/>
    </source>
</evidence>
<sequence>MGNPVLIGVAGGSGSGKTTVAKELYRQFQNDSVTMIEQDSYYKDQSHLSPEERALTNYDHPFAFDNDLLLAHLQELMQGKAIQKPIYDFKVHNRKPEQIQVDPKDVIILEGMLILEDERIRNLMDIKVYVDTDADVRIARRIVRDIEERGRSLDSVVTQYLNVVRPMHLQFIEPTKRYADVIIPEGGYNRVALDLLSTKIGNILLEKQQFTNQS</sequence>
<proteinExistence type="inferred from homology"/>
<gene>
    <name evidence="1" type="primary">udk</name>
    <name type="ordered locus">BBR47_19080</name>
</gene>
<dbReference type="EC" id="2.7.1.48" evidence="1"/>
<dbReference type="EMBL" id="AP008955">
    <property type="protein sequence ID" value="BAH42885.1"/>
    <property type="molecule type" value="Genomic_DNA"/>
</dbReference>
<dbReference type="RefSeq" id="WP_012685622.1">
    <property type="nucleotide sequence ID" value="NC_012491.1"/>
</dbReference>
<dbReference type="SMR" id="C0ZAS6"/>
<dbReference type="STRING" id="358681.BBR47_19080"/>
<dbReference type="KEGG" id="bbe:BBR47_19080"/>
<dbReference type="eggNOG" id="COG0572">
    <property type="taxonomic scope" value="Bacteria"/>
</dbReference>
<dbReference type="HOGENOM" id="CLU_021278_1_2_9"/>
<dbReference type="UniPathway" id="UPA00574">
    <property type="reaction ID" value="UER00637"/>
</dbReference>
<dbReference type="UniPathway" id="UPA00579">
    <property type="reaction ID" value="UER00640"/>
</dbReference>
<dbReference type="Proteomes" id="UP000001877">
    <property type="component" value="Chromosome"/>
</dbReference>
<dbReference type="GO" id="GO:0005737">
    <property type="term" value="C:cytoplasm"/>
    <property type="evidence" value="ECO:0007669"/>
    <property type="project" value="UniProtKB-SubCell"/>
</dbReference>
<dbReference type="GO" id="GO:0005524">
    <property type="term" value="F:ATP binding"/>
    <property type="evidence" value="ECO:0007669"/>
    <property type="project" value="UniProtKB-UniRule"/>
</dbReference>
<dbReference type="GO" id="GO:0043771">
    <property type="term" value="F:cytidine kinase activity"/>
    <property type="evidence" value="ECO:0007669"/>
    <property type="project" value="RHEA"/>
</dbReference>
<dbReference type="GO" id="GO:0004849">
    <property type="term" value="F:uridine kinase activity"/>
    <property type="evidence" value="ECO:0007669"/>
    <property type="project" value="UniProtKB-UniRule"/>
</dbReference>
<dbReference type="GO" id="GO:0044211">
    <property type="term" value="P:CTP salvage"/>
    <property type="evidence" value="ECO:0007669"/>
    <property type="project" value="UniProtKB-UniRule"/>
</dbReference>
<dbReference type="GO" id="GO:0044206">
    <property type="term" value="P:UMP salvage"/>
    <property type="evidence" value="ECO:0007669"/>
    <property type="project" value="UniProtKB-UniRule"/>
</dbReference>
<dbReference type="CDD" id="cd02023">
    <property type="entry name" value="UMPK"/>
    <property type="match status" value="1"/>
</dbReference>
<dbReference type="Gene3D" id="3.40.50.300">
    <property type="entry name" value="P-loop containing nucleotide triphosphate hydrolases"/>
    <property type="match status" value="1"/>
</dbReference>
<dbReference type="HAMAP" id="MF_00551">
    <property type="entry name" value="Uridine_kinase"/>
    <property type="match status" value="1"/>
</dbReference>
<dbReference type="InterPro" id="IPR027417">
    <property type="entry name" value="P-loop_NTPase"/>
</dbReference>
<dbReference type="InterPro" id="IPR006083">
    <property type="entry name" value="PRK/URK"/>
</dbReference>
<dbReference type="InterPro" id="IPR026008">
    <property type="entry name" value="Uridine_kinase"/>
</dbReference>
<dbReference type="InterPro" id="IPR000764">
    <property type="entry name" value="Uridine_kinase-like"/>
</dbReference>
<dbReference type="NCBIfam" id="NF004018">
    <property type="entry name" value="PRK05480.1"/>
    <property type="match status" value="1"/>
</dbReference>
<dbReference type="NCBIfam" id="TIGR00235">
    <property type="entry name" value="udk"/>
    <property type="match status" value="1"/>
</dbReference>
<dbReference type="PANTHER" id="PTHR10285">
    <property type="entry name" value="URIDINE KINASE"/>
    <property type="match status" value="1"/>
</dbReference>
<dbReference type="Pfam" id="PF00485">
    <property type="entry name" value="PRK"/>
    <property type="match status" value="1"/>
</dbReference>
<dbReference type="PRINTS" id="PR00988">
    <property type="entry name" value="URIDINKINASE"/>
</dbReference>
<dbReference type="SUPFAM" id="SSF52540">
    <property type="entry name" value="P-loop containing nucleoside triphosphate hydrolases"/>
    <property type="match status" value="1"/>
</dbReference>
<feature type="chain" id="PRO_1000200508" description="Uridine kinase">
    <location>
        <begin position="1"/>
        <end position="214"/>
    </location>
</feature>
<feature type="binding site" evidence="1">
    <location>
        <begin position="11"/>
        <end position="18"/>
    </location>
    <ligand>
        <name>ATP</name>
        <dbReference type="ChEBI" id="CHEBI:30616"/>
    </ligand>
</feature>
<name>URK_BREBN</name>
<reference key="1">
    <citation type="submission" date="2005-03" db="EMBL/GenBank/DDBJ databases">
        <title>Brevibacillus brevis strain 47, complete genome.</title>
        <authorList>
            <person name="Hosoyama A."/>
            <person name="Yamada R."/>
            <person name="Hongo Y."/>
            <person name="Terui Y."/>
            <person name="Ankai A."/>
            <person name="Masuyama W."/>
            <person name="Sekiguchi M."/>
            <person name="Takeda T."/>
            <person name="Asano K."/>
            <person name="Ohji S."/>
            <person name="Ichikawa N."/>
            <person name="Narita S."/>
            <person name="Aoki N."/>
            <person name="Miura H."/>
            <person name="Matsushita S."/>
            <person name="Sekigawa T."/>
            <person name="Yamagata H."/>
            <person name="Yoshikawa H."/>
            <person name="Udaka S."/>
            <person name="Tanikawa S."/>
            <person name="Fujita N."/>
        </authorList>
    </citation>
    <scope>NUCLEOTIDE SEQUENCE [LARGE SCALE GENOMIC DNA]</scope>
    <source>
        <strain>47 / JCM 6285 / NBRC 100599</strain>
    </source>
</reference>
<protein>
    <recommendedName>
        <fullName evidence="1">Uridine kinase</fullName>
        <ecNumber evidence="1">2.7.1.48</ecNumber>
    </recommendedName>
    <alternativeName>
        <fullName evidence="1">Cytidine monophosphokinase</fullName>
    </alternativeName>
    <alternativeName>
        <fullName evidence="1">Uridine monophosphokinase</fullName>
    </alternativeName>
</protein>
<comment type="catalytic activity">
    <reaction evidence="1">
        <text>uridine + ATP = UMP + ADP + H(+)</text>
        <dbReference type="Rhea" id="RHEA:16825"/>
        <dbReference type="ChEBI" id="CHEBI:15378"/>
        <dbReference type="ChEBI" id="CHEBI:16704"/>
        <dbReference type="ChEBI" id="CHEBI:30616"/>
        <dbReference type="ChEBI" id="CHEBI:57865"/>
        <dbReference type="ChEBI" id="CHEBI:456216"/>
        <dbReference type="EC" id="2.7.1.48"/>
    </reaction>
</comment>
<comment type="catalytic activity">
    <reaction evidence="1">
        <text>cytidine + ATP = CMP + ADP + H(+)</text>
        <dbReference type="Rhea" id="RHEA:24674"/>
        <dbReference type="ChEBI" id="CHEBI:15378"/>
        <dbReference type="ChEBI" id="CHEBI:17562"/>
        <dbReference type="ChEBI" id="CHEBI:30616"/>
        <dbReference type="ChEBI" id="CHEBI:60377"/>
        <dbReference type="ChEBI" id="CHEBI:456216"/>
        <dbReference type="EC" id="2.7.1.48"/>
    </reaction>
</comment>
<comment type="pathway">
    <text evidence="1">Pyrimidine metabolism; CTP biosynthesis via salvage pathway; CTP from cytidine: step 1/3.</text>
</comment>
<comment type="pathway">
    <text evidence="1">Pyrimidine metabolism; UMP biosynthesis via salvage pathway; UMP from uridine: step 1/1.</text>
</comment>
<comment type="subcellular location">
    <subcellularLocation>
        <location evidence="1">Cytoplasm</location>
    </subcellularLocation>
</comment>
<comment type="similarity">
    <text evidence="1">Belongs to the uridine kinase family.</text>
</comment>
<accession>C0ZAS6</accession>
<organism>
    <name type="scientific">Brevibacillus brevis (strain 47 / JCM 6285 / NBRC 100599)</name>
    <dbReference type="NCBI Taxonomy" id="358681"/>
    <lineage>
        <taxon>Bacteria</taxon>
        <taxon>Bacillati</taxon>
        <taxon>Bacillota</taxon>
        <taxon>Bacilli</taxon>
        <taxon>Bacillales</taxon>
        <taxon>Paenibacillaceae</taxon>
        <taxon>Brevibacillus</taxon>
    </lineage>
</organism>
<keyword id="KW-0067">ATP-binding</keyword>
<keyword id="KW-0963">Cytoplasm</keyword>
<keyword id="KW-0418">Kinase</keyword>
<keyword id="KW-0547">Nucleotide-binding</keyword>
<keyword id="KW-1185">Reference proteome</keyword>
<keyword id="KW-0808">Transferase</keyword>